<protein>
    <recommendedName>
        <fullName evidence="1">Holo-[acyl-carrier-protein] synthase</fullName>
        <shortName evidence="1">Holo-ACP synthase</shortName>
        <ecNumber evidence="1">2.7.8.7</ecNumber>
    </recommendedName>
    <alternativeName>
        <fullName evidence="1">4'-phosphopantetheinyl transferase AcpS</fullName>
    </alternativeName>
</protein>
<dbReference type="EC" id="2.7.8.7" evidence="1"/>
<dbReference type="EMBL" id="AE002160">
    <property type="protein sequence ID" value="AAF39234.1"/>
    <property type="molecule type" value="Genomic_DNA"/>
</dbReference>
<dbReference type="PIR" id="D81710">
    <property type="entry name" value="D81710"/>
</dbReference>
<dbReference type="RefSeq" id="WP_010230282.1">
    <property type="nucleotide sequence ID" value="NZ_CP063055.1"/>
</dbReference>
<dbReference type="SMR" id="Q9PKT6"/>
<dbReference type="GeneID" id="1245728"/>
<dbReference type="KEGG" id="cmu:TC_0376"/>
<dbReference type="eggNOG" id="COG0736">
    <property type="taxonomic scope" value="Bacteria"/>
</dbReference>
<dbReference type="HOGENOM" id="CLU_089696_0_2_0"/>
<dbReference type="OrthoDB" id="517356at2"/>
<dbReference type="Proteomes" id="UP000000800">
    <property type="component" value="Chromosome"/>
</dbReference>
<dbReference type="GO" id="GO:0005737">
    <property type="term" value="C:cytoplasm"/>
    <property type="evidence" value="ECO:0007669"/>
    <property type="project" value="UniProtKB-SubCell"/>
</dbReference>
<dbReference type="GO" id="GO:0008897">
    <property type="term" value="F:holo-[acyl-carrier-protein] synthase activity"/>
    <property type="evidence" value="ECO:0007669"/>
    <property type="project" value="UniProtKB-UniRule"/>
</dbReference>
<dbReference type="GO" id="GO:0000287">
    <property type="term" value="F:magnesium ion binding"/>
    <property type="evidence" value="ECO:0007669"/>
    <property type="project" value="UniProtKB-UniRule"/>
</dbReference>
<dbReference type="GO" id="GO:0006633">
    <property type="term" value="P:fatty acid biosynthetic process"/>
    <property type="evidence" value="ECO:0007669"/>
    <property type="project" value="UniProtKB-UniRule"/>
</dbReference>
<dbReference type="Gene3D" id="3.90.470.20">
    <property type="entry name" value="4'-phosphopantetheinyl transferase domain"/>
    <property type="match status" value="1"/>
</dbReference>
<dbReference type="HAMAP" id="MF_00101">
    <property type="entry name" value="AcpS"/>
    <property type="match status" value="1"/>
</dbReference>
<dbReference type="InterPro" id="IPR008278">
    <property type="entry name" value="4-PPantetheinyl_Trfase_dom"/>
</dbReference>
<dbReference type="InterPro" id="IPR037143">
    <property type="entry name" value="4-PPantetheinyl_Trfase_dom_sf"/>
</dbReference>
<dbReference type="InterPro" id="IPR002582">
    <property type="entry name" value="ACPS"/>
</dbReference>
<dbReference type="InterPro" id="IPR004568">
    <property type="entry name" value="Ppantetheine-prot_Trfase_dom"/>
</dbReference>
<dbReference type="NCBIfam" id="TIGR00516">
    <property type="entry name" value="acpS"/>
    <property type="match status" value="1"/>
</dbReference>
<dbReference type="NCBIfam" id="TIGR00556">
    <property type="entry name" value="pantethn_trn"/>
    <property type="match status" value="1"/>
</dbReference>
<dbReference type="Pfam" id="PF01648">
    <property type="entry name" value="ACPS"/>
    <property type="match status" value="1"/>
</dbReference>
<dbReference type="SUPFAM" id="SSF56214">
    <property type="entry name" value="4'-phosphopantetheinyl transferase"/>
    <property type="match status" value="1"/>
</dbReference>
<evidence type="ECO:0000255" key="1">
    <source>
        <dbReference type="HAMAP-Rule" id="MF_00101"/>
    </source>
</evidence>
<gene>
    <name evidence="1" type="primary">acpS</name>
    <name type="ordered locus">TC_0376</name>
</gene>
<keyword id="KW-0963">Cytoplasm</keyword>
<keyword id="KW-0275">Fatty acid biosynthesis</keyword>
<keyword id="KW-0276">Fatty acid metabolism</keyword>
<keyword id="KW-0444">Lipid biosynthesis</keyword>
<keyword id="KW-0443">Lipid metabolism</keyword>
<keyword id="KW-0460">Magnesium</keyword>
<keyword id="KW-0479">Metal-binding</keyword>
<keyword id="KW-0808">Transferase</keyword>
<comment type="function">
    <text evidence="1">Transfers the 4'-phosphopantetheine moiety from coenzyme A to a Ser of acyl-carrier-protein.</text>
</comment>
<comment type="catalytic activity">
    <reaction evidence="1">
        <text>apo-[ACP] + CoA = holo-[ACP] + adenosine 3',5'-bisphosphate + H(+)</text>
        <dbReference type="Rhea" id="RHEA:12068"/>
        <dbReference type="Rhea" id="RHEA-COMP:9685"/>
        <dbReference type="Rhea" id="RHEA-COMP:9690"/>
        <dbReference type="ChEBI" id="CHEBI:15378"/>
        <dbReference type="ChEBI" id="CHEBI:29999"/>
        <dbReference type="ChEBI" id="CHEBI:57287"/>
        <dbReference type="ChEBI" id="CHEBI:58343"/>
        <dbReference type="ChEBI" id="CHEBI:64479"/>
        <dbReference type="EC" id="2.7.8.7"/>
    </reaction>
</comment>
<comment type="cofactor">
    <cofactor evidence="1">
        <name>Mg(2+)</name>
        <dbReference type="ChEBI" id="CHEBI:18420"/>
    </cofactor>
</comment>
<comment type="subcellular location">
    <subcellularLocation>
        <location evidence="1">Cytoplasm</location>
    </subcellularLocation>
</comment>
<comment type="similarity">
    <text evidence="1">Belongs to the P-Pant transferase superfamily. AcpS family.</text>
</comment>
<accession>Q9PKT6</accession>
<organism>
    <name type="scientific">Chlamydia muridarum (strain MoPn / Nigg)</name>
    <dbReference type="NCBI Taxonomy" id="243161"/>
    <lineage>
        <taxon>Bacteria</taxon>
        <taxon>Pseudomonadati</taxon>
        <taxon>Chlamydiota</taxon>
        <taxon>Chlamydiia</taxon>
        <taxon>Chlamydiales</taxon>
        <taxon>Chlamydiaceae</taxon>
        <taxon>Chlamydia/Chlamydophila group</taxon>
        <taxon>Chlamydia</taxon>
    </lineage>
</organism>
<proteinExistence type="inferred from homology"/>
<reference key="1">
    <citation type="journal article" date="2000" name="Nucleic Acids Res.">
        <title>Genome sequences of Chlamydia trachomatis MoPn and Chlamydia pneumoniae AR39.</title>
        <authorList>
            <person name="Read T.D."/>
            <person name="Brunham R.C."/>
            <person name="Shen C."/>
            <person name="Gill S.R."/>
            <person name="Heidelberg J.F."/>
            <person name="White O."/>
            <person name="Hickey E.K."/>
            <person name="Peterson J.D."/>
            <person name="Utterback T.R."/>
            <person name="Berry K.J."/>
            <person name="Bass S."/>
            <person name="Linher K.D."/>
            <person name="Weidman J.F."/>
            <person name="Khouri H.M."/>
            <person name="Craven B."/>
            <person name="Bowman C."/>
            <person name="Dodson R.J."/>
            <person name="Gwinn M.L."/>
            <person name="Nelson W.C."/>
            <person name="DeBoy R.T."/>
            <person name="Kolonay J.F."/>
            <person name="McClarty G."/>
            <person name="Salzberg S.L."/>
            <person name="Eisen J.A."/>
            <person name="Fraser C.M."/>
        </authorList>
    </citation>
    <scope>NUCLEOTIDE SEQUENCE [LARGE SCALE GENOMIC DNA]</scope>
    <source>
        <strain>MoPn / Nigg</strain>
    </source>
</reference>
<name>ACPS_CHLMU</name>
<feature type="chain" id="PRO_0000175631" description="Holo-[acyl-carrier-protein] synthase">
    <location>
        <begin position="1"/>
        <end position="125"/>
    </location>
</feature>
<feature type="binding site" evidence="1">
    <location>
        <position position="7"/>
    </location>
    <ligand>
        <name>Mg(2+)</name>
        <dbReference type="ChEBI" id="CHEBI:18420"/>
    </ligand>
</feature>
<feature type="binding site" evidence="1">
    <location>
        <position position="56"/>
    </location>
    <ligand>
        <name>Mg(2+)</name>
        <dbReference type="ChEBI" id="CHEBI:18420"/>
    </ligand>
</feature>
<sequence>MFGIGTDIIEIDRIRRAYHTYGDRFLNKIFTKGEQAYCFSKSDPYASLAVRFAAKEAVSKALGTGIGKSLKWKEIEISRGTQHPQVSVPESLLALLEVKRILLSMSHCREYATAVAIAEVTNSSK</sequence>